<gene>
    <name evidence="1" type="primary">aaeB</name>
    <name type="ordered locus">ECSE_3519</name>
</gene>
<name>AAEB_ECOSE</name>
<feature type="chain" id="PRO_1000146737" description="p-hydroxybenzoic acid efflux pump subunit AaeB">
    <location>
        <begin position="1"/>
        <end position="655"/>
    </location>
</feature>
<feature type="transmembrane region" description="Helical" evidence="1">
    <location>
        <begin position="13"/>
        <end position="33"/>
    </location>
</feature>
<feature type="transmembrane region" description="Helical" evidence="1">
    <location>
        <begin position="38"/>
        <end position="58"/>
    </location>
</feature>
<feature type="transmembrane region" description="Helical" evidence="1">
    <location>
        <begin position="69"/>
        <end position="89"/>
    </location>
</feature>
<feature type="transmembrane region" description="Helical" evidence="1">
    <location>
        <begin position="93"/>
        <end position="113"/>
    </location>
</feature>
<feature type="transmembrane region" description="Helical" evidence="1">
    <location>
        <begin position="121"/>
        <end position="141"/>
    </location>
</feature>
<feature type="transmembrane region" description="Helical" evidence="1">
    <location>
        <begin position="152"/>
        <end position="172"/>
    </location>
</feature>
<feature type="transmembrane region" description="Helical" evidence="1">
    <location>
        <begin position="370"/>
        <end position="390"/>
    </location>
</feature>
<feature type="transmembrane region" description="Helical" evidence="1">
    <location>
        <begin position="407"/>
        <end position="427"/>
    </location>
</feature>
<feature type="transmembrane region" description="Helical" evidence="1">
    <location>
        <begin position="431"/>
        <end position="451"/>
    </location>
</feature>
<feature type="transmembrane region" description="Helical" evidence="1">
    <location>
        <begin position="459"/>
        <end position="479"/>
    </location>
</feature>
<feature type="transmembrane region" description="Helical" evidence="1">
    <location>
        <begin position="482"/>
        <end position="502"/>
    </location>
</feature>
<organism>
    <name type="scientific">Escherichia coli (strain SE11)</name>
    <dbReference type="NCBI Taxonomy" id="409438"/>
    <lineage>
        <taxon>Bacteria</taxon>
        <taxon>Pseudomonadati</taxon>
        <taxon>Pseudomonadota</taxon>
        <taxon>Gammaproteobacteria</taxon>
        <taxon>Enterobacterales</taxon>
        <taxon>Enterobacteriaceae</taxon>
        <taxon>Escherichia</taxon>
    </lineage>
</organism>
<sequence>MGIFSIANQHIRFAVKLATAIVLALFVGFHFQLETPRWAVLTAAIVAAGPAFAAGGEPYSGAIRYRGFLRIIGTFIGCIAGLVIIIAMIRAPLLMILVCCIWAGFCTWISSLVRIENSYAWGLAGYTALIIVITIQPEPLLTPQFAVERCSEIVIGIVCAIMADLLFSPRSIKQEVDRELESLLVAQYQLMQLCIKHGDGEVVDKAWGDLVRRTTALQGMRSNLNMESSRWARANRRLKAINTLSLTLITQSCETYLIQNTRPELITDTFREFFDTPVETAQDVHKQLKRLRRVIAWTGERETPVTIYSWVAAATRYQLLKRGVISNTKINATEEEILQGEPEVKVESAERHHAMVNFWRTTLSCILGTLFWLWTGWTSGSGAMVMIAVVTSLAMRLPNPRMVAIDFIYGTLAALPLGLLYFLVIIPNTQQSMLLLCISLAVLGFFLGIEVQKRRLGSMGALASTINIIVLDNPMTFHFSQFLDSALGQIVGCVLAFTVILLVRDKSRDRTGRVLLNQFVSAAVSAMTTNVARRKENHLPALYQQLFLLMNKFPGDLPKFRLALTMIIAHQRLRDAPIPVNEDLSAFHRQMRRTADHVISARSDDKRRRYFGQLLEELEIYQEKLRIWQAPPQVTEPVHRLAGMLHKYQHALTDS</sequence>
<evidence type="ECO:0000255" key="1">
    <source>
        <dbReference type="HAMAP-Rule" id="MF_01545"/>
    </source>
</evidence>
<dbReference type="EMBL" id="AP009240">
    <property type="protein sequence ID" value="BAG79043.1"/>
    <property type="molecule type" value="Genomic_DNA"/>
</dbReference>
<dbReference type="RefSeq" id="WP_000510962.1">
    <property type="nucleotide sequence ID" value="NC_011415.1"/>
</dbReference>
<dbReference type="SMR" id="B6I1V8"/>
<dbReference type="GeneID" id="75206090"/>
<dbReference type="KEGG" id="ecy:ECSE_3519"/>
<dbReference type="HOGENOM" id="CLU_027647_0_0_6"/>
<dbReference type="Proteomes" id="UP000008199">
    <property type="component" value="Chromosome"/>
</dbReference>
<dbReference type="GO" id="GO:0005886">
    <property type="term" value="C:plasma membrane"/>
    <property type="evidence" value="ECO:0007669"/>
    <property type="project" value="UniProtKB-SubCell"/>
</dbReference>
<dbReference type="GO" id="GO:0022857">
    <property type="term" value="F:transmembrane transporter activity"/>
    <property type="evidence" value="ECO:0007669"/>
    <property type="project" value="UniProtKB-UniRule"/>
</dbReference>
<dbReference type="GO" id="GO:0046942">
    <property type="term" value="P:carboxylic acid transport"/>
    <property type="evidence" value="ECO:0007669"/>
    <property type="project" value="InterPro"/>
</dbReference>
<dbReference type="HAMAP" id="MF_01545">
    <property type="entry name" value="AaeB"/>
    <property type="match status" value="1"/>
</dbReference>
<dbReference type="InterPro" id="IPR006726">
    <property type="entry name" value="PHBA_efflux_AaeB/fusaric-R"/>
</dbReference>
<dbReference type="InterPro" id="IPR023706">
    <property type="entry name" value="PHBA_efflux_pump_AaeB"/>
</dbReference>
<dbReference type="NCBIfam" id="NF007916">
    <property type="entry name" value="PRK10631.1"/>
    <property type="match status" value="1"/>
</dbReference>
<dbReference type="PANTHER" id="PTHR30509:SF9">
    <property type="entry name" value="MULTIDRUG RESISTANCE PROTEIN MDTO"/>
    <property type="match status" value="1"/>
</dbReference>
<dbReference type="PANTHER" id="PTHR30509">
    <property type="entry name" value="P-HYDROXYBENZOIC ACID EFFLUX PUMP SUBUNIT-RELATED"/>
    <property type="match status" value="1"/>
</dbReference>
<dbReference type="Pfam" id="PF04632">
    <property type="entry name" value="FUSC"/>
    <property type="match status" value="1"/>
</dbReference>
<accession>B6I1V8</accession>
<proteinExistence type="inferred from homology"/>
<keyword id="KW-0997">Cell inner membrane</keyword>
<keyword id="KW-1003">Cell membrane</keyword>
<keyword id="KW-0472">Membrane</keyword>
<keyword id="KW-0812">Transmembrane</keyword>
<keyword id="KW-1133">Transmembrane helix</keyword>
<keyword id="KW-0813">Transport</keyword>
<comment type="function">
    <text evidence="1">Forms an efflux pump with AaeA. Could function as a metabolic relief valve, allowing to eliminate certain compounds when they accumulate to high levels in the cell.</text>
</comment>
<comment type="subcellular location">
    <subcellularLocation>
        <location evidence="1">Cell inner membrane</location>
        <topology evidence="1">Multi-pass membrane protein</topology>
    </subcellularLocation>
</comment>
<comment type="induction">
    <text evidence="1">Positively coregulated with aaeA and aaeX by AaeR.</text>
</comment>
<comment type="similarity">
    <text evidence="1">Belongs to the aromatic acid exporter ArAE (TC 2.A.85) family.</text>
</comment>
<protein>
    <recommendedName>
        <fullName evidence="1">p-hydroxybenzoic acid efflux pump subunit AaeB</fullName>
        <shortName evidence="1">pHBA efflux pump protein B</shortName>
    </recommendedName>
</protein>
<reference key="1">
    <citation type="journal article" date="2008" name="DNA Res.">
        <title>Complete genome sequence and comparative analysis of the wild-type commensal Escherichia coli strain SE11 isolated from a healthy adult.</title>
        <authorList>
            <person name="Oshima K."/>
            <person name="Toh H."/>
            <person name="Ogura Y."/>
            <person name="Sasamoto H."/>
            <person name="Morita H."/>
            <person name="Park S.-H."/>
            <person name="Ooka T."/>
            <person name="Iyoda S."/>
            <person name="Taylor T.D."/>
            <person name="Hayashi T."/>
            <person name="Itoh K."/>
            <person name="Hattori M."/>
        </authorList>
    </citation>
    <scope>NUCLEOTIDE SEQUENCE [LARGE SCALE GENOMIC DNA]</scope>
    <source>
        <strain>SE11</strain>
    </source>
</reference>